<gene>
    <name type="primary">TBL7</name>
    <name type="ordered locus">At1g48880</name>
    <name type="ORF">F27K7.9</name>
</gene>
<dbReference type="EMBL" id="AC084414">
    <property type="protein sequence ID" value="AAG29735.1"/>
    <property type="status" value="ALT_SEQ"/>
    <property type="molecule type" value="Genomic_DNA"/>
</dbReference>
<dbReference type="EMBL" id="CP002684">
    <property type="protein sequence ID" value="AEE32362.1"/>
    <property type="molecule type" value="Genomic_DNA"/>
</dbReference>
<dbReference type="PIR" id="F96526">
    <property type="entry name" value="F96526"/>
</dbReference>
<dbReference type="RefSeq" id="NP_175319.2">
    <property type="nucleotide sequence ID" value="NM_103782.3"/>
</dbReference>
<dbReference type="SMR" id="F4I037"/>
<dbReference type="FunCoup" id="F4I037">
    <property type="interactions" value="110"/>
</dbReference>
<dbReference type="STRING" id="3702.F4I037"/>
<dbReference type="iPTMnet" id="F4I037"/>
<dbReference type="PaxDb" id="3702-AT1G48880.1"/>
<dbReference type="ProteomicsDB" id="233013"/>
<dbReference type="EnsemblPlants" id="AT1G48880.1">
    <property type="protein sequence ID" value="AT1G48880.1"/>
    <property type="gene ID" value="AT1G48880"/>
</dbReference>
<dbReference type="GeneID" id="841310"/>
<dbReference type="Gramene" id="AT1G48880.1">
    <property type="protein sequence ID" value="AT1G48880.1"/>
    <property type="gene ID" value="AT1G48880"/>
</dbReference>
<dbReference type="KEGG" id="ath:AT1G48880"/>
<dbReference type="Araport" id="AT1G48880"/>
<dbReference type="TAIR" id="AT1G48880">
    <property type="gene designation" value="TBL7"/>
</dbReference>
<dbReference type="eggNOG" id="ENOG502QSWQ">
    <property type="taxonomic scope" value="Eukaryota"/>
</dbReference>
<dbReference type="HOGENOM" id="CLU_020953_0_1_1"/>
<dbReference type="InParanoid" id="F4I037"/>
<dbReference type="OMA" id="VINHEWS"/>
<dbReference type="PRO" id="PR:F4I037"/>
<dbReference type="Proteomes" id="UP000006548">
    <property type="component" value="Chromosome 1"/>
</dbReference>
<dbReference type="ExpressionAtlas" id="F4I037">
    <property type="expression patterns" value="baseline and differential"/>
</dbReference>
<dbReference type="GO" id="GO:0016020">
    <property type="term" value="C:membrane"/>
    <property type="evidence" value="ECO:0007669"/>
    <property type="project" value="UniProtKB-SubCell"/>
</dbReference>
<dbReference type="GO" id="GO:0016413">
    <property type="term" value="F:O-acetyltransferase activity"/>
    <property type="evidence" value="ECO:0007669"/>
    <property type="project" value="InterPro"/>
</dbReference>
<dbReference type="InterPro" id="IPR029962">
    <property type="entry name" value="TBL"/>
</dbReference>
<dbReference type="InterPro" id="IPR026057">
    <property type="entry name" value="TBL_C"/>
</dbReference>
<dbReference type="InterPro" id="IPR025846">
    <property type="entry name" value="TBL_N"/>
</dbReference>
<dbReference type="PANTHER" id="PTHR32285:SF34">
    <property type="entry name" value="PROTEIN TRICHOME BEREFRINGENCE-LIKE 7"/>
    <property type="match status" value="1"/>
</dbReference>
<dbReference type="PANTHER" id="PTHR32285">
    <property type="entry name" value="PROTEIN TRICHOME BIREFRINGENCE-LIKE 9-RELATED"/>
    <property type="match status" value="1"/>
</dbReference>
<dbReference type="Pfam" id="PF13839">
    <property type="entry name" value="PC-Esterase"/>
    <property type="match status" value="1"/>
</dbReference>
<dbReference type="Pfam" id="PF14416">
    <property type="entry name" value="PMR5N"/>
    <property type="match status" value="1"/>
</dbReference>
<organism>
    <name type="scientific">Arabidopsis thaliana</name>
    <name type="common">Mouse-ear cress</name>
    <dbReference type="NCBI Taxonomy" id="3702"/>
    <lineage>
        <taxon>Eukaryota</taxon>
        <taxon>Viridiplantae</taxon>
        <taxon>Streptophyta</taxon>
        <taxon>Embryophyta</taxon>
        <taxon>Tracheophyta</taxon>
        <taxon>Spermatophyta</taxon>
        <taxon>Magnoliopsida</taxon>
        <taxon>eudicotyledons</taxon>
        <taxon>Gunneridae</taxon>
        <taxon>Pentapetalae</taxon>
        <taxon>rosids</taxon>
        <taxon>malvids</taxon>
        <taxon>Brassicales</taxon>
        <taxon>Brassicaceae</taxon>
        <taxon>Camelineae</taxon>
        <taxon>Arabidopsis</taxon>
    </lineage>
</organism>
<accession>F4I037</accession>
<accession>Q9FVP8</accession>
<protein>
    <recommendedName>
        <fullName>Protein trichome berefringence-like 7</fullName>
    </recommendedName>
</protein>
<comment type="function">
    <text evidence="1 2">May act as a bridging protein that binds pectin and other cell wall polysaccharides. Probably involved in maintaining esterification of pectins (By similarity). May be involved in the specific O-acetylation of cell wall polymers (By similarity).</text>
</comment>
<comment type="subcellular location">
    <subcellularLocation>
        <location evidence="4">Membrane</location>
        <topology evidence="4">Single-pass type II membrane protein</topology>
    </subcellularLocation>
</comment>
<comment type="miscellaneous">
    <text evidence="5">Contains 2 motifs that are conserved in esterases, but it is unlikely that this protein belongs to the catalytically active pectin esterases.</text>
</comment>
<comment type="similarity">
    <text evidence="4">Belongs to the PC-esterase family. TBL subfamily.</text>
</comment>
<comment type="sequence caution" evidence="4">
    <conflict type="erroneous gene model prediction">
        <sequence resource="EMBL-CDS" id="AAG29735"/>
    </conflict>
</comment>
<reference key="1">
    <citation type="journal article" date="2000" name="Nature">
        <title>Sequence and analysis of chromosome 1 of the plant Arabidopsis thaliana.</title>
        <authorList>
            <person name="Theologis A."/>
            <person name="Ecker J.R."/>
            <person name="Palm C.J."/>
            <person name="Federspiel N.A."/>
            <person name="Kaul S."/>
            <person name="White O."/>
            <person name="Alonso J."/>
            <person name="Altafi H."/>
            <person name="Araujo R."/>
            <person name="Bowman C.L."/>
            <person name="Brooks S.Y."/>
            <person name="Buehler E."/>
            <person name="Chan A."/>
            <person name="Chao Q."/>
            <person name="Chen H."/>
            <person name="Cheuk R.F."/>
            <person name="Chin C.W."/>
            <person name="Chung M.K."/>
            <person name="Conn L."/>
            <person name="Conway A.B."/>
            <person name="Conway A.R."/>
            <person name="Creasy T.H."/>
            <person name="Dewar K."/>
            <person name="Dunn P."/>
            <person name="Etgu P."/>
            <person name="Feldblyum T.V."/>
            <person name="Feng J.-D."/>
            <person name="Fong B."/>
            <person name="Fujii C.Y."/>
            <person name="Gill J.E."/>
            <person name="Goldsmith A.D."/>
            <person name="Haas B."/>
            <person name="Hansen N.F."/>
            <person name="Hughes B."/>
            <person name="Huizar L."/>
            <person name="Hunter J.L."/>
            <person name="Jenkins J."/>
            <person name="Johnson-Hopson C."/>
            <person name="Khan S."/>
            <person name="Khaykin E."/>
            <person name="Kim C.J."/>
            <person name="Koo H.L."/>
            <person name="Kremenetskaia I."/>
            <person name="Kurtz D.B."/>
            <person name="Kwan A."/>
            <person name="Lam B."/>
            <person name="Langin-Hooper S."/>
            <person name="Lee A."/>
            <person name="Lee J.M."/>
            <person name="Lenz C.A."/>
            <person name="Li J.H."/>
            <person name="Li Y.-P."/>
            <person name="Lin X."/>
            <person name="Liu S.X."/>
            <person name="Liu Z.A."/>
            <person name="Luros J.S."/>
            <person name="Maiti R."/>
            <person name="Marziali A."/>
            <person name="Militscher J."/>
            <person name="Miranda M."/>
            <person name="Nguyen M."/>
            <person name="Nierman W.C."/>
            <person name="Osborne B.I."/>
            <person name="Pai G."/>
            <person name="Peterson J."/>
            <person name="Pham P.K."/>
            <person name="Rizzo M."/>
            <person name="Rooney T."/>
            <person name="Rowley D."/>
            <person name="Sakano H."/>
            <person name="Salzberg S.L."/>
            <person name="Schwartz J.R."/>
            <person name="Shinn P."/>
            <person name="Southwick A.M."/>
            <person name="Sun H."/>
            <person name="Tallon L.J."/>
            <person name="Tambunga G."/>
            <person name="Toriumi M.J."/>
            <person name="Town C.D."/>
            <person name="Utterback T."/>
            <person name="Van Aken S."/>
            <person name="Vaysberg M."/>
            <person name="Vysotskaia V.S."/>
            <person name="Walker M."/>
            <person name="Wu D."/>
            <person name="Yu G."/>
            <person name="Fraser C.M."/>
            <person name="Venter J.C."/>
            <person name="Davis R.W."/>
        </authorList>
    </citation>
    <scope>NUCLEOTIDE SEQUENCE [LARGE SCALE GENOMIC DNA]</scope>
    <source>
        <strain>cv. Columbia</strain>
    </source>
</reference>
<reference key="2">
    <citation type="journal article" date="2017" name="Plant J.">
        <title>Araport11: a complete reannotation of the Arabidopsis thaliana reference genome.</title>
        <authorList>
            <person name="Cheng C.Y."/>
            <person name="Krishnakumar V."/>
            <person name="Chan A.P."/>
            <person name="Thibaud-Nissen F."/>
            <person name="Schobel S."/>
            <person name="Town C.D."/>
        </authorList>
    </citation>
    <scope>GENOME REANNOTATION</scope>
    <source>
        <strain>cv. Columbia</strain>
    </source>
</reference>
<reference key="3">
    <citation type="journal article" date="2007" name="Plant J.">
        <title>Arabidopsis ESK1 encodes a novel regulator of freezing tolerance.</title>
        <authorList>
            <person name="Xin Z."/>
            <person name="Mandaokar A."/>
            <person name="Chen J."/>
            <person name="Last R.L."/>
            <person name="Browse J."/>
        </authorList>
    </citation>
    <scope>GENE FAMILY</scope>
    <source>
        <strain>cv. Columbia</strain>
    </source>
</reference>
<reference key="4">
    <citation type="journal article" date="2010" name="Plant Physiol.">
        <title>TRICHOME BIREFRINGENCE and its homolog AT5G01360 encode plant-specific DUF231 proteins required for cellulose biosynthesis in Arabidopsis.</title>
        <authorList>
            <person name="Bischoff V."/>
            <person name="Nita S."/>
            <person name="Neumetzler L."/>
            <person name="Schindelasch D."/>
            <person name="Urbain A."/>
            <person name="Eshed R."/>
            <person name="Persson S."/>
            <person name="Delmer D."/>
            <person name="Scheible W.R."/>
        </authorList>
    </citation>
    <scope>GENE FAMILY</scope>
    <scope>NOMENCLATURE</scope>
</reference>
<reference key="5">
    <citation type="journal article" date="2010" name="Plant Signal. Behav.">
        <title>Involvement of TBL/DUF231 proteins into cell wall biology.</title>
        <authorList>
            <person name="Bischoff V."/>
            <person name="Selbig J."/>
            <person name="Scheible W.R."/>
        </authorList>
    </citation>
    <scope>3D-STRUCTURE MODELING</scope>
</reference>
<sequence length="445" mass="50617">MSNFTKSSSFNRRALSSLAIESPRNSSSSVFTSPIGSAFASPRSQNFGGSPRPSTNRLKEISYLFQVLIIAGTIVSFLVIIAGGYLYVVPSLGQTFLGYNGALEFNSSVVGDTECDIFDGNWVVDDNYPLYNASECPFVEKGFNCLGNGRGHDEYLKWRWKPKHCTVPRFEVRDVLKRLRGKRIVFVGDSMSRTQWESLICMLMTGLEDKRSVYEVNGNNITKRIRFLGVRFSSYNFTVEFYRSVFLVQPGRLRWHAPKRVKSTLKLDVLDVINHEWSSADFLIFNTGQWWVPGKLFETGCYFQVGNSLRLGMSIPAAYRVALETWASWIESTVDPNKTRVLFRTFEPSHWSDHRSCNVTKYPAPDTEGRDKSIFSEMIKEVVKNMTIPVSILDVTSMSAFRSDGHVGLWSDNPLVPDCSHWCLPGVPDIWNEILLFFLFRQPVQ</sequence>
<proteinExistence type="inferred from homology"/>
<feature type="chain" id="PRO_0000425373" description="Protein trichome berefringence-like 7">
    <location>
        <begin position="1"/>
        <end position="445"/>
    </location>
</feature>
<feature type="transmembrane region" description="Helical; Signal-anchor for type II membrane protein" evidence="3">
    <location>
        <begin position="69"/>
        <end position="89"/>
    </location>
</feature>
<feature type="short sequence motif" description="GDS motif">
    <location>
        <begin position="188"/>
        <end position="190"/>
    </location>
</feature>
<feature type="short sequence motif" description="DCXHWCLPGXXDXWN motif">
    <location>
        <begin position="418"/>
        <end position="432"/>
    </location>
</feature>
<evidence type="ECO:0000250" key="1">
    <source>
        <dbReference type="UniProtKB" id="Q9FG35"/>
    </source>
</evidence>
<evidence type="ECO:0000250" key="2">
    <source>
        <dbReference type="UniProtKB" id="Q9LY46"/>
    </source>
</evidence>
<evidence type="ECO:0000255" key="3"/>
<evidence type="ECO:0000305" key="4"/>
<evidence type="ECO:0000305" key="5">
    <source>
    </source>
</evidence>
<name>TBL7_ARATH</name>
<keyword id="KW-0472">Membrane</keyword>
<keyword id="KW-1185">Reference proteome</keyword>
<keyword id="KW-0735">Signal-anchor</keyword>
<keyword id="KW-0812">Transmembrane</keyword>
<keyword id="KW-1133">Transmembrane helix</keyword>